<gene>
    <name evidence="1" type="primary">miaA</name>
    <name type="ordered locus">ACL_0881</name>
</gene>
<keyword id="KW-0067">ATP-binding</keyword>
<keyword id="KW-0460">Magnesium</keyword>
<keyword id="KW-0547">Nucleotide-binding</keyword>
<keyword id="KW-1185">Reference proteome</keyword>
<keyword id="KW-0808">Transferase</keyword>
<keyword id="KW-0819">tRNA processing</keyword>
<proteinExistence type="inferred from homology"/>
<organism>
    <name type="scientific">Acholeplasma laidlawii (strain PG-8A)</name>
    <dbReference type="NCBI Taxonomy" id="441768"/>
    <lineage>
        <taxon>Bacteria</taxon>
        <taxon>Bacillati</taxon>
        <taxon>Mycoplasmatota</taxon>
        <taxon>Mollicutes</taxon>
        <taxon>Acholeplasmatales</taxon>
        <taxon>Acholeplasmataceae</taxon>
        <taxon>Acholeplasma</taxon>
    </lineage>
</organism>
<name>MIAA_ACHLI</name>
<feature type="chain" id="PRO_0000377042" description="tRNA dimethylallyltransferase">
    <location>
        <begin position="1"/>
        <end position="280"/>
    </location>
</feature>
<feature type="region of interest" description="Interaction with substrate tRNA" evidence="1">
    <location>
        <begin position="34"/>
        <end position="37"/>
    </location>
</feature>
<feature type="binding site" evidence="1">
    <location>
        <begin position="9"/>
        <end position="16"/>
    </location>
    <ligand>
        <name>ATP</name>
        <dbReference type="ChEBI" id="CHEBI:30616"/>
    </ligand>
</feature>
<feature type="binding site" evidence="1">
    <location>
        <begin position="11"/>
        <end position="16"/>
    </location>
    <ligand>
        <name>substrate</name>
    </ligand>
</feature>
<feature type="site" description="Interaction with substrate tRNA" evidence="1">
    <location>
        <position position="96"/>
    </location>
</feature>
<reference key="1">
    <citation type="journal article" date="2011" name="J. Bacteriol.">
        <title>Complete genome and proteome of Acholeplasma laidlawii.</title>
        <authorList>
            <person name="Lazarev V.N."/>
            <person name="Levitskii S.A."/>
            <person name="Basovskii Y.I."/>
            <person name="Chukin M.M."/>
            <person name="Akopian T.A."/>
            <person name="Vereshchagin V.V."/>
            <person name="Kostrjukova E.S."/>
            <person name="Kovaleva G.Y."/>
            <person name="Kazanov M.D."/>
            <person name="Malko D.B."/>
            <person name="Vitreschak A.G."/>
            <person name="Sernova N.V."/>
            <person name="Gelfand M.S."/>
            <person name="Demina I.A."/>
            <person name="Serebryakova M.V."/>
            <person name="Galyamina M.A."/>
            <person name="Vtyurin N.N."/>
            <person name="Rogov S.I."/>
            <person name="Alexeev D.G."/>
            <person name="Ladygina V.G."/>
            <person name="Govorun V.M."/>
        </authorList>
    </citation>
    <scope>NUCLEOTIDE SEQUENCE [LARGE SCALE GENOMIC DNA]</scope>
    <source>
        <strain>PG-8A</strain>
    </source>
</reference>
<evidence type="ECO:0000255" key="1">
    <source>
        <dbReference type="HAMAP-Rule" id="MF_00185"/>
    </source>
</evidence>
<dbReference type="EC" id="2.5.1.75" evidence="1"/>
<dbReference type="EMBL" id="CP000896">
    <property type="protein sequence ID" value="ABX81494.1"/>
    <property type="molecule type" value="Genomic_DNA"/>
</dbReference>
<dbReference type="RefSeq" id="WP_012242825.1">
    <property type="nucleotide sequence ID" value="NC_010163.1"/>
</dbReference>
<dbReference type="SMR" id="A9NGL4"/>
<dbReference type="STRING" id="441768.ACL_0881"/>
<dbReference type="GeneID" id="41339034"/>
<dbReference type="KEGG" id="acl:ACL_0881"/>
<dbReference type="eggNOG" id="COG0324">
    <property type="taxonomic scope" value="Bacteria"/>
</dbReference>
<dbReference type="HOGENOM" id="CLU_032616_0_1_14"/>
<dbReference type="OrthoDB" id="9776390at2"/>
<dbReference type="Proteomes" id="UP000008558">
    <property type="component" value="Chromosome"/>
</dbReference>
<dbReference type="GO" id="GO:0005524">
    <property type="term" value="F:ATP binding"/>
    <property type="evidence" value="ECO:0007669"/>
    <property type="project" value="UniProtKB-UniRule"/>
</dbReference>
<dbReference type="GO" id="GO:0052381">
    <property type="term" value="F:tRNA dimethylallyltransferase activity"/>
    <property type="evidence" value="ECO:0007669"/>
    <property type="project" value="UniProtKB-UniRule"/>
</dbReference>
<dbReference type="GO" id="GO:0006400">
    <property type="term" value="P:tRNA modification"/>
    <property type="evidence" value="ECO:0007669"/>
    <property type="project" value="TreeGrafter"/>
</dbReference>
<dbReference type="Gene3D" id="3.40.50.300">
    <property type="entry name" value="P-loop containing nucleotide triphosphate hydrolases"/>
    <property type="match status" value="1"/>
</dbReference>
<dbReference type="HAMAP" id="MF_00185">
    <property type="entry name" value="IPP_trans"/>
    <property type="match status" value="1"/>
</dbReference>
<dbReference type="InterPro" id="IPR039657">
    <property type="entry name" value="Dimethylallyltransferase"/>
</dbReference>
<dbReference type="InterPro" id="IPR018022">
    <property type="entry name" value="IPT"/>
</dbReference>
<dbReference type="InterPro" id="IPR027417">
    <property type="entry name" value="P-loop_NTPase"/>
</dbReference>
<dbReference type="NCBIfam" id="TIGR00174">
    <property type="entry name" value="miaA"/>
    <property type="match status" value="1"/>
</dbReference>
<dbReference type="PANTHER" id="PTHR11088">
    <property type="entry name" value="TRNA DIMETHYLALLYLTRANSFERASE"/>
    <property type="match status" value="1"/>
</dbReference>
<dbReference type="PANTHER" id="PTHR11088:SF60">
    <property type="entry name" value="TRNA DIMETHYLALLYLTRANSFERASE"/>
    <property type="match status" value="1"/>
</dbReference>
<dbReference type="Pfam" id="PF01715">
    <property type="entry name" value="IPPT"/>
    <property type="match status" value="1"/>
</dbReference>
<dbReference type="SUPFAM" id="SSF52540">
    <property type="entry name" value="P-loop containing nucleoside triphosphate hydrolases"/>
    <property type="match status" value="2"/>
</dbReference>
<protein>
    <recommendedName>
        <fullName evidence="1">tRNA dimethylallyltransferase</fullName>
        <ecNumber evidence="1">2.5.1.75</ecNumber>
    </recommendedName>
    <alternativeName>
        <fullName evidence="1">Dimethylallyl diphosphate:tRNA dimethylallyltransferase</fullName>
        <shortName evidence="1">DMAPP:tRNA dimethylallyltransferase</shortName>
        <shortName evidence="1">DMATase</shortName>
    </alternativeName>
    <alternativeName>
        <fullName evidence="1">Isopentenyl-diphosphate:tRNA isopentenyltransferase</fullName>
        <shortName evidence="1">IPP transferase</shortName>
        <shortName evidence="1">IPPT</shortName>
        <shortName evidence="1">IPTase</shortName>
    </alternativeName>
</protein>
<accession>A9NGL4</accession>
<comment type="function">
    <text evidence="1">Catalyzes the transfer of a dimethylallyl group onto the adenine at position 37 in tRNAs that read codons beginning with uridine, leading to the formation of N6-(dimethylallyl)adenosine (i(6)A).</text>
</comment>
<comment type="catalytic activity">
    <reaction evidence="1">
        <text>adenosine(37) in tRNA + dimethylallyl diphosphate = N(6)-dimethylallyladenosine(37) in tRNA + diphosphate</text>
        <dbReference type="Rhea" id="RHEA:26482"/>
        <dbReference type="Rhea" id="RHEA-COMP:10162"/>
        <dbReference type="Rhea" id="RHEA-COMP:10375"/>
        <dbReference type="ChEBI" id="CHEBI:33019"/>
        <dbReference type="ChEBI" id="CHEBI:57623"/>
        <dbReference type="ChEBI" id="CHEBI:74411"/>
        <dbReference type="ChEBI" id="CHEBI:74415"/>
        <dbReference type="EC" id="2.5.1.75"/>
    </reaction>
</comment>
<comment type="cofactor">
    <cofactor evidence="1">
        <name>Mg(2+)</name>
        <dbReference type="ChEBI" id="CHEBI:18420"/>
    </cofactor>
</comment>
<comment type="subunit">
    <text evidence="1">Monomer.</text>
</comment>
<comment type="similarity">
    <text evidence="1">Belongs to the IPP transferase family.</text>
</comment>
<sequence length="280" mass="32142">MKKVVCIVGPTGSGKTALSVKLAKSLGAEIINGDSVSIYKKLDIGSAKITTDEMDGVKHHLISHVALDEPYTVYNFQQDVRTLIDQIDKPFIVGGSGLYVKSALYNYEFEQQDNVEFPNINEMIEVIRKADPDIEIDLNNPRRIESAYRTIISGQKRSNKTKKNEPLYDIYLIYLDMDRKILKKRLETRLDLMIEKGFIEETKALINYDLNIIGYREIKDYLNGMNDLDTAKEKIITATMRFAKRQKTWFINQMKPKVYNALSPDLLDECLKDIKEFIGV</sequence>